<name>ASSY_BREBN</name>
<gene>
    <name evidence="1" type="primary">argG</name>
    <name type="ordered locus">BBR47_52920</name>
</gene>
<comment type="catalytic activity">
    <reaction evidence="1">
        <text>L-citrulline + L-aspartate + ATP = 2-(N(omega)-L-arginino)succinate + AMP + diphosphate + H(+)</text>
        <dbReference type="Rhea" id="RHEA:10932"/>
        <dbReference type="ChEBI" id="CHEBI:15378"/>
        <dbReference type="ChEBI" id="CHEBI:29991"/>
        <dbReference type="ChEBI" id="CHEBI:30616"/>
        <dbReference type="ChEBI" id="CHEBI:33019"/>
        <dbReference type="ChEBI" id="CHEBI:57472"/>
        <dbReference type="ChEBI" id="CHEBI:57743"/>
        <dbReference type="ChEBI" id="CHEBI:456215"/>
        <dbReference type="EC" id="6.3.4.5"/>
    </reaction>
</comment>
<comment type="pathway">
    <text evidence="1">Amino-acid biosynthesis; L-arginine biosynthesis; L-arginine from L-ornithine and carbamoyl phosphate: step 2/3.</text>
</comment>
<comment type="subunit">
    <text evidence="1">Homotetramer.</text>
</comment>
<comment type="subcellular location">
    <subcellularLocation>
        <location evidence="1">Cytoplasm</location>
    </subcellularLocation>
</comment>
<comment type="similarity">
    <text evidence="1">Belongs to the argininosuccinate synthase family. Type 1 subfamily.</text>
</comment>
<accession>C0Z6S0</accession>
<keyword id="KW-0028">Amino-acid biosynthesis</keyword>
<keyword id="KW-0055">Arginine biosynthesis</keyword>
<keyword id="KW-0067">ATP-binding</keyword>
<keyword id="KW-0963">Cytoplasm</keyword>
<keyword id="KW-0436">Ligase</keyword>
<keyword id="KW-0547">Nucleotide-binding</keyword>
<keyword id="KW-1185">Reference proteome</keyword>
<reference key="1">
    <citation type="submission" date="2005-03" db="EMBL/GenBank/DDBJ databases">
        <title>Brevibacillus brevis strain 47, complete genome.</title>
        <authorList>
            <person name="Hosoyama A."/>
            <person name="Yamada R."/>
            <person name="Hongo Y."/>
            <person name="Terui Y."/>
            <person name="Ankai A."/>
            <person name="Masuyama W."/>
            <person name="Sekiguchi M."/>
            <person name="Takeda T."/>
            <person name="Asano K."/>
            <person name="Ohji S."/>
            <person name="Ichikawa N."/>
            <person name="Narita S."/>
            <person name="Aoki N."/>
            <person name="Miura H."/>
            <person name="Matsushita S."/>
            <person name="Sekigawa T."/>
            <person name="Yamagata H."/>
            <person name="Yoshikawa H."/>
            <person name="Udaka S."/>
            <person name="Tanikawa S."/>
            <person name="Fujita N."/>
        </authorList>
    </citation>
    <scope>NUCLEOTIDE SEQUENCE [LARGE SCALE GENOMIC DNA]</scope>
    <source>
        <strain>47 / JCM 6285 / NBRC 100599</strain>
    </source>
</reference>
<organism>
    <name type="scientific">Brevibacillus brevis (strain 47 / JCM 6285 / NBRC 100599)</name>
    <dbReference type="NCBI Taxonomy" id="358681"/>
    <lineage>
        <taxon>Bacteria</taxon>
        <taxon>Bacillati</taxon>
        <taxon>Bacillota</taxon>
        <taxon>Bacilli</taxon>
        <taxon>Bacillales</taxon>
        <taxon>Paenibacillaceae</taxon>
        <taxon>Brevibacillus</taxon>
    </lineage>
</organism>
<dbReference type="EC" id="6.3.4.5" evidence="1"/>
<dbReference type="EMBL" id="AP008955">
    <property type="protein sequence ID" value="BAH46269.1"/>
    <property type="molecule type" value="Genomic_DNA"/>
</dbReference>
<dbReference type="RefSeq" id="WP_015893518.1">
    <property type="nucleotide sequence ID" value="NC_012491.1"/>
</dbReference>
<dbReference type="SMR" id="C0Z6S0"/>
<dbReference type="STRING" id="358681.BBR47_52920"/>
<dbReference type="KEGG" id="bbe:BBR47_52920"/>
<dbReference type="eggNOG" id="COG0137">
    <property type="taxonomic scope" value="Bacteria"/>
</dbReference>
<dbReference type="HOGENOM" id="CLU_032784_4_2_9"/>
<dbReference type="UniPathway" id="UPA00068">
    <property type="reaction ID" value="UER00113"/>
</dbReference>
<dbReference type="Proteomes" id="UP000001877">
    <property type="component" value="Chromosome"/>
</dbReference>
<dbReference type="GO" id="GO:0005737">
    <property type="term" value="C:cytoplasm"/>
    <property type="evidence" value="ECO:0007669"/>
    <property type="project" value="UniProtKB-SubCell"/>
</dbReference>
<dbReference type="GO" id="GO:0004055">
    <property type="term" value="F:argininosuccinate synthase activity"/>
    <property type="evidence" value="ECO:0007669"/>
    <property type="project" value="UniProtKB-UniRule"/>
</dbReference>
<dbReference type="GO" id="GO:0005524">
    <property type="term" value="F:ATP binding"/>
    <property type="evidence" value="ECO:0007669"/>
    <property type="project" value="UniProtKB-UniRule"/>
</dbReference>
<dbReference type="GO" id="GO:0000053">
    <property type="term" value="P:argininosuccinate metabolic process"/>
    <property type="evidence" value="ECO:0007669"/>
    <property type="project" value="TreeGrafter"/>
</dbReference>
<dbReference type="GO" id="GO:0006526">
    <property type="term" value="P:L-arginine biosynthetic process"/>
    <property type="evidence" value="ECO:0007669"/>
    <property type="project" value="UniProtKB-UniRule"/>
</dbReference>
<dbReference type="GO" id="GO:0000050">
    <property type="term" value="P:urea cycle"/>
    <property type="evidence" value="ECO:0007669"/>
    <property type="project" value="TreeGrafter"/>
</dbReference>
<dbReference type="CDD" id="cd01999">
    <property type="entry name" value="ASS"/>
    <property type="match status" value="1"/>
</dbReference>
<dbReference type="FunFam" id="1.20.5.470:FF:000002">
    <property type="entry name" value="Argininosuccinate synthase"/>
    <property type="match status" value="1"/>
</dbReference>
<dbReference type="FunFam" id="3.40.50.620:FF:000038">
    <property type="entry name" value="Argininosuccinate synthase"/>
    <property type="match status" value="1"/>
</dbReference>
<dbReference type="FunFam" id="3.90.1260.10:FF:000007">
    <property type="entry name" value="Argininosuccinate synthase"/>
    <property type="match status" value="1"/>
</dbReference>
<dbReference type="Gene3D" id="3.90.1260.10">
    <property type="entry name" value="Argininosuccinate synthetase, chain A, domain 2"/>
    <property type="match status" value="1"/>
</dbReference>
<dbReference type="Gene3D" id="3.40.50.620">
    <property type="entry name" value="HUPs"/>
    <property type="match status" value="1"/>
</dbReference>
<dbReference type="Gene3D" id="1.20.5.470">
    <property type="entry name" value="Single helix bin"/>
    <property type="match status" value="1"/>
</dbReference>
<dbReference type="HAMAP" id="MF_00005">
    <property type="entry name" value="Arg_succ_synth_type1"/>
    <property type="match status" value="1"/>
</dbReference>
<dbReference type="InterPro" id="IPR048268">
    <property type="entry name" value="Arginosuc_syn_C"/>
</dbReference>
<dbReference type="InterPro" id="IPR048267">
    <property type="entry name" value="Arginosuc_syn_N"/>
</dbReference>
<dbReference type="InterPro" id="IPR001518">
    <property type="entry name" value="Arginosuc_synth"/>
</dbReference>
<dbReference type="InterPro" id="IPR018223">
    <property type="entry name" value="Arginosuc_synth_CS"/>
</dbReference>
<dbReference type="InterPro" id="IPR023434">
    <property type="entry name" value="Arginosuc_synth_type_1_subfam"/>
</dbReference>
<dbReference type="InterPro" id="IPR024074">
    <property type="entry name" value="AS_cat/multimer_dom_body"/>
</dbReference>
<dbReference type="InterPro" id="IPR014729">
    <property type="entry name" value="Rossmann-like_a/b/a_fold"/>
</dbReference>
<dbReference type="NCBIfam" id="TIGR00032">
    <property type="entry name" value="argG"/>
    <property type="match status" value="1"/>
</dbReference>
<dbReference type="NCBIfam" id="NF001770">
    <property type="entry name" value="PRK00509.1"/>
    <property type="match status" value="1"/>
</dbReference>
<dbReference type="PANTHER" id="PTHR11587">
    <property type="entry name" value="ARGININOSUCCINATE SYNTHASE"/>
    <property type="match status" value="1"/>
</dbReference>
<dbReference type="PANTHER" id="PTHR11587:SF2">
    <property type="entry name" value="ARGININOSUCCINATE SYNTHASE"/>
    <property type="match status" value="1"/>
</dbReference>
<dbReference type="Pfam" id="PF20979">
    <property type="entry name" value="Arginosuc_syn_C"/>
    <property type="match status" value="1"/>
</dbReference>
<dbReference type="Pfam" id="PF00764">
    <property type="entry name" value="Arginosuc_synth"/>
    <property type="match status" value="1"/>
</dbReference>
<dbReference type="SUPFAM" id="SSF52402">
    <property type="entry name" value="Adenine nucleotide alpha hydrolases-like"/>
    <property type="match status" value="1"/>
</dbReference>
<dbReference type="SUPFAM" id="SSF69864">
    <property type="entry name" value="Argininosuccinate synthetase, C-terminal domain"/>
    <property type="match status" value="1"/>
</dbReference>
<dbReference type="PROSITE" id="PS00564">
    <property type="entry name" value="ARGININOSUCCIN_SYN_1"/>
    <property type="match status" value="1"/>
</dbReference>
<dbReference type="PROSITE" id="PS00565">
    <property type="entry name" value="ARGININOSUCCIN_SYN_2"/>
    <property type="match status" value="1"/>
</dbReference>
<sequence length="419" mass="46325">MAKDKIVLAYSGGLDTSVAIKWLQDTYNYDVIAVALDVGEGKDLDFVQKKALQVGALKSIVVDAKDAFAEEFVLPALKANAMYEGKYPLVSALSRYLISRVLVEIAEKEGAVAVAHGCTGKGNDQVRFDVSFTALNPDIKIVAPVREWGWTRDEEIEYAKKNNIPIPIDLDNPYSIDQNLWGRSCECGVLEDPWAAPPEGAYDLTKSIMDAPDEAEEIEITFVQGKPTALNGEELPLAELILKLNKIAGNHGVGRIDHVENRLVGIKSREVYETPAATTLILAHRELEFLTQPREVAQFKPIVEQKLAQVIYEGLWFSPIRNAVQAFIEETQKHVTGVVRVKLHKGHAIVVGRTSASSLYSHELATYNAGDQFDHKAALGFIKLWGLPTKVYAQVNEGVLHENKNTAIKILDEKDAIKQ</sequence>
<protein>
    <recommendedName>
        <fullName evidence="1">Argininosuccinate synthase</fullName>
        <ecNumber evidence="1">6.3.4.5</ecNumber>
    </recommendedName>
    <alternativeName>
        <fullName evidence="1">Citrulline--aspartate ligase</fullName>
    </alternativeName>
</protein>
<proteinExistence type="inferred from homology"/>
<evidence type="ECO:0000255" key="1">
    <source>
        <dbReference type="HAMAP-Rule" id="MF_00005"/>
    </source>
</evidence>
<feature type="chain" id="PRO_1000191883" description="Argininosuccinate synthase">
    <location>
        <begin position="1"/>
        <end position="419"/>
    </location>
</feature>
<feature type="binding site" evidence="1">
    <location>
        <begin position="9"/>
        <end position="17"/>
    </location>
    <ligand>
        <name>ATP</name>
        <dbReference type="ChEBI" id="CHEBI:30616"/>
    </ligand>
</feature>
<feature type="binding site" evidence="1">
    <location>
        <position position="87"/>
    </location>
    <ligand>
        <name>L-citrulline</name>
        <dbReference type="ChEBI" id="CHEBI:57743"/>
    </ligand>
</feature>
<feature type="binding site" evidence="1">
    <location>
        <position position="117"/>
    </location>
    <ligand>
        <name>ATP</name>
        <dbReference type="ChEBI" id="CHEBI:30616"/>
    </ligand>
</feature>
<feature type="binding site" evidence="1">
    <location>
        <position position="119"/>
    </location>
    <ligand>
        <name>L-aspartate</name>
        <dbReference type="ChEBI" id="CHEBI:29991"/>
    </ligand>
</feature>
<feature type="binding site" evidence="1">
    <location>
        <position position="123"/>
    </location>
    <ligand>
        <name>L-aspartate</name>
        <dbReference type="ChEBI" id="CHEBI:29991"/>
    </ligand>
</feature>
<feature type="binding site" evidence="1">
    <location>
        <position position="123"/>
    </location>
    <ligand>
        <name>L-citrulline</name>
        <dbReference type="ChEBI" id="CHEBI:57743"/>
    </ligand>
</feature>
<feature type="binding site" evidence="1">
    <location>
        <position position="124"/>
    </location>
    <ligand>
        <name>L-aspartate</name>
        <dbReference type="ChEBI" id="CHEBI:29991"/>
    </ligand>
</feature>
<feature type="binding site" evidence="1">
    <location>
        <position position="127"/>
    </location>
    <ligand>
        <name>L-citrulline</name>
        <dbReference type="ChEBI" id="CHEBI:57743"/>
    </ligand>
</feature>
<feature type="binding site" evidence="1">
    <location>
        <position position="175"/>
    </location>
    <ligand>
        <name>L-citrulline</name>
        <dbReference type="ChEBI" id="CHEBI:57743"/>
    </ligand>
</feature>
<feature type="binding site" evidence="1">
    <location>
        <position position="184"/>
    </location>
    <ligand>
        <name>L-citrulline</name>
        <dbReference type="ChEBI" id="CHEBI:57743"/>
    </ligand>
</feature>
<feature type="binding site" evidence="1">
    <location>
        <position position="260"/>
    </location>
    <ligand>
        <name>L-citrulline</name>
        <dbReference type="ChEBI" id="CHEBI:57743"/>
    </ligand>
</feature>
<feature type="binding site" evidence="1">
    <location>
        <position position="272"/>
    </location>
    <ligand>
        <name>L-citrulline</name>
        <dbReference type="ChEBI" id="CHEBI:57743"/>
    </ligand>
</feature>